<accession>Q5NVK0</accession>
<sequence>MNEDKDTDSKKSEEYEDDFEKDLEWLINENEKSDASIIEMACEKEENINQDLKENETVIEHTKQHSDPDKSLQDEVSPRKNDIISVPGIQPLDPISDSDSENSFQESRLESQKDLEEEEDEEVRRYIMEKIVQANKLLQNQEPVNDKRERKLKFEDKLVDLEVPPLEDTTTSKNYFENERNMFGKLSQLCISNDFGQENVLLSLTNVSCEENKDRTILVERDGKFELLNLQDIASQGFLPPINNANTTENDPQQLLPRSSNSSVSGTKKEDSAAKIHAVTHSSTGKPLAYIPQPPLNRKTCPSSAVISDQSKGNGNSNHRAQSAHISPVTSTCCLSPRQKELQKQLEQKREKLKREEERRKIEEEKEKKRENDIVFKAWLQKKREQVLEMRRIQRAKEIEDMNSRQENRDPQQAFRLWLKKKHEEQMKERQTEELRKQEECLFFLKGTEGRERAFKQWLRRKRIEKMAEQQAVRERTRQLRLEAKRSKQLQHHLYMSEAKPFRFTDHYN</sequence>
<protein>
    <recommendedName>
        <fullName evidence="1">Coiled-coil domain-containing protein 181</fullName>
    </recommendedName>
</protein>
<organism>
    <name type="scientific">Pongo abelii</name>
    <name type="common">Sumatran orangutan</name>
    <name type="synonym">Pongo pygmaeus abelii</name>
    <dbReference type="NCBI Taxonomy" id="9601"/>
    <lineage>
        <taxon>Eukaryota</taxon>
        <taxon>Metazoa</taxon>
        <taxon>Chordata</taxon>
        <taxon>Craniata</taxon>
        <taxon>Vertebrata</taxon>
        <taxon>Euteleostomi</taxon>
        <taxon>Mammalia</taxon>
        <taxon>Eutheria</taxon>
        <taxon>Euarchontoglires</taxon>
        <taxon>Primates</taxon>
        <taxon>Haplorrhini</taxon>
        <taxon>Catarrhini</taxon>
        <taxon>Hominidae</taxon>
        <taxon>Pongo</taxon>
    </lineage>
</organism>
<evidence type="ECO:0000250" key="1">
    <source>
        <dbReference type="UniProtKB" id="Q5TID7"/>
    </source>
</evidence>
<evidence type="ECO:0000250" key="2">
    <source>
        <dbReference type="UniProtKB" id="Q80ZU5"/>
    </source>
</evidence>
<evidence type="ECO:0000255" key="3"/>
<evidence type="ECO:0000256" key="4">
    <source>
        <dbReference type="SAM" id="MobiDB-lite"/>
    </source>
</evidence>
<evidence type="ECO:0000305" key="5"/>
<proteinExistence type="evidence at transcript level"/>
<reference key="1">
    <citation type="submission" date="2004-11" db="EMBL/GenBank/DDBJ databases">
        <authorList>
            <consortium name="The German cDNA consortium"/>
        </authorList>
    </citation>
    <scope>NUCLEOTIDE SEQUENCE [LARGE SCALE MRNA]</scope>
    <source>
        <tissue>Brain cortex</tissue>
    </source>
</reference>
<comment type="function">
    <text evidence="2">Microtubule-binding protein that localizes to the microtubular manchette of elongating spermatids.</text>
</comment>
<comment type="subunit">
    <text evidence="2">Homodimer. Interacts with HOOK1. Interacts with HOOK2. Interacts with HOOK3.</text>
</comment>
<comment type="subcellular location">
    <subcellularLocation>
        <location evidence="2">Cytoplasm</location>
        <location evidence="2">Cytoskeleton</location>
    </subcellularLocation>
    <subcellularLocation>
        <location evidence="2">Cell projection</location>
        <location evidence="2">Cilium</location>
        <location evidence="2">Flagellum</location>
    </subcellularLocation>
    <text evidence="2">Localizes to the microtubular manchette of elongating spermatids. Localizes to the sperm flagella and to the basal half of motile cilia.</text>
</comment>
<comment type="similarity">
    <text evidence="5">Belongs to the CCDC181 family.</text>
</comment>
<name>CC181_PONAB</name>
<dbReference type="EMBL" id="CR926026">
    <property type="protein sequence ID" value="CAI29663.1"/>
    <property type="molecule type" value="mRNA"/>
</dbReference>
<dbReference type="RefSeq" id="NP_001127687.1">
    <property type="nucleotide sequence ID" value="NM_001134215.1"/>
</dbReference>
<dbReference type="SMR" id="Q5NVK0"/>
<dbReference type="FunCoup" id="Q5NVK0">
    <property type="interactions" value="18"/>
</dbReference>
<dbReference type="STRING" id="9601.ENSPPYP00000000619"/>
<dbReference type="GeneID" id="100174769"/>
<dbReference type="KEGG" id="pon:100174769"/>
<dbReference type="CTD" id="57821"/>
<dbReference type="eggNOG" id="ENOG502QV5R">
    <property type="taxonomic scope" value="Eukaryota"/>
</dbReference>
<dbReference type="InParanoid" id="Q5NVK0"/>
<dbReference type="OrthoDB" id="6288248at2759"/>
<dbReference type="Proteomes" id="UP000001595">
    <property type="component" value="Unplaced"/>
</dbReference>
<dbReference type="GO" id="GO:0005737">
    <property type="term" value="C:cytoplasm"/>
    <property type="evidence" value="ECO:0007669"/>
    <property type="project" value="UniProtKB-KW"/>
</dbReference>
<dbReference type="GO" id="GO:0002177">
    <property type="term" value="C:manchette"/>
    <property type="evidence" value="ECO:0000250"/>
    <property type="project" value="UniProtKB"/>
</dbReference>
<dbReference type="GO" id="GO:0005874">
    <property type="term" value="C:microtubule"/>
    <property type="evidence" value="ECO:0007669"/>
    <property type="project" value="UniProtKB-KW"/>
</dbReference>
<dbReference type="GO" id="GO:0036126">
    <property type="term" value="C:sperm flagellum"/>
    <property type="evidence" value="ECO:0000250"/>
    <property type="project" value="UniProtKB"/>
</dbReference>
<dbReference type="GO" id="GO:0008017">
    <property type="term" value="F:microtubule binding"/>
    <property type="evidence" value="ECO:0000250"/>
    <property type="project" value="UniProtKB"/>
</dbReference>
<dbReference type="InterPro" id="IPR026687">
    <property type="entry name" value="CCDC181"/>
</dbReference>
<dbReference type="PANTHER" id="PTHR14320">
    <property type="entry name" value="COILED-COIL DOMAIN-CONTAINING PROTEIN 181"/>
    <property type="match status" value="1"/>
</dbReference>
<dbReference type="PANTHER" id="PTHR14320:SF2">
    <property type="entry name" value="COILED-COIL DOMAIN-CONTAINING PROTEIN 181"/>
    <property type="match status" value="1"/>
</dbReference>
<feature type="chain" id="PRO_0000279468" description="Coiled-coil domain-containing protein 181">
    <location>
        <begin position="1"/>
        <end position="509"/>
    </location>
</feature>
<feature type="region of interest" description="Disordered" evidence="4">
    <location>
        <begin position="58"/>
        <end position="120"/>
    </location>
</feature>
<feature type="region of interest" description="Disordered" evidence="4">
    <location>
        <begin position="241"/>
        <end position="332"/>
    </location>
</feature>
<feature type="region of interest" description="Disordered" evidence="4">
    <location>
        <begin position="345"/>
        <end position="367"/>
    </location>
</feature>
<feature type="coiled-coil region" evidence="3">
    <location>
        <begin position="335"/>
        <end position="375"/>
    </location>
</feature>
<feature type="compositionally biased region" description="Basic and acidic residues" evidence="4">
    <location>
        <begin position="58"/>
        <end position="82"/>
    </location>
</feature>
<feature type="compositionally biased region" description="Polar residues" evidence="4">
    <location>
        <begin position="243"/>
        <end position="266"/>
    </location>
</feature>
<feature type="compositionally biased region" description="Polar residues" evidence="4">
    <location>
        <begin position="300"/>
        <end position="332"/>
    </location>
</feature>
<gene>
    <name evidence="1" type="primary">CCDC181</name>
</gene>
<keyword id="KW-0966">Cell projection</keyword>
<keyword id="KW-0969">Cilium</keyword>
<keyword id="KW-0175">Coiled coil</keyword>
<keyword id="KW-0963">Cytoplasm</keyword>
<keyword id="KW-0206">Cytoskeleton</keyword>
<keyword id="KW-0282">Flagellum</keyword>
<keyword id="KW-0493">Microtubule</keyword>
<keyword id="KW-1185">Reference proteome</keyword>